<proteinExistence type="predicted"/>
<geneLocation type="mitochondrion"/>
<feature type="chain" id="PRO_0000196883" description="Uncharacterized 91 kDa protein in cob intron">
    <location>
        <begin position="1"/>
        <end position="807"/>
    </location>
</feature>
<feature type="domain" description="Reverse transcriptase" evidence="1">
    <location>
        <begin position="281"/>
        <end position="566"/>
    </location>
</feature>
<evidence type="ECO:0000255" key="1">
    <source>
        <dbReference type="PROSITE-ProRule" id="PRU00405"/>
    </source>
</evidence>
<evidence type="ECO:0000305" key="2"/>
<sequence>MRRCGIYVYPHRERDILCVKIWTIHLGSWGNPMPNRACVQKVLPVTKQISSDGSVQIDTVRAVLPEFQFPSHPQIGDCLSWIETFFSRSLVGFYDQGYTPGEESCTNSTIKGMSGKPTSIISNIYTTTGPAKVSNDYAVRDPGVAVDHFDQYGPLKEGRSLNSAKISTQWSGSATLKSSNRSIFNIGLGYINTFLGVSNVRGFSTGSGRSKNVLNKLDDLSKRSKNYPNLVIDRNLYKDFLLNRDMFLIAYNKLKSNPGMMTHGLKPDTLDGMSIDVIDKIIQSLKSEEFNFTPGRRILIDKASGGKRPLTIGSPRDKLVQEILRIVLEAIYEPLFNTASHGFRPGRSCHSALRSIFTNFKGCTWWIEGDIKACFDSIPHDKLIALLSSKIKDQRFIQLIRKALNAGYLTENRYKYDIVGTPQGSIVSPILANIYLHQLDEFIENLKSEFDYKGPIARKRTSESRHLHYLMAKAKRENADSKTIRKIAIEMRNVPNKIHGIQSNKLMYVRYADDWIVAVNGSYTQTKEILAKITCFCSSIGLTVSPTKTKITNSYTDKILFLGTNISHSKNVTFSRHFGILQRNSGFILLSAPMDRIAKKLRETGLMLNHKGRSVIRWLPLDVRQIIGLANSIIRGYDNYYSFVHNRGRFATYVYFIIKDCVLRTLAHKLSLGTRMKVIKKFGPDLSIYDYNSRDENNKPKLITQLFKPSWKVNVWGFKSDKVKLNIRTLYASHLSMANLENLQCAACQSTYKVEMHHVRQMKNLKPIKGTLDYLMAKANRKQIPLCRSCHMKLHANKLTLNEDKKV</sequence>
<organism>
    <name type="scientific">Schizosaccharomyces pombe (strain 972 / ATCC 24843)</name>
    <name type="common">Fission yeast</name>
    <dbReference type="NCBI Taxonomy" id="284812"/>
    <lineage>
        <taxon>Eukaryota</taxon>
        <taxon>Fungi</taxon>
        <taxon>Dikarya</taxon>
        <taxon>Ascomycota</taxon>
        <taxon>Taphrinomycotina</taxon>
        <taxon>Schizosaccharomycetes</taxon>
        <taxon>Schizosaccharomycetales</taxon>
        <taxon>Schizosaccharomycetaceae</taxon>
        <taxon>Schizosaccharomyces</taxon>
    </lineage>
</organism>
<keyword id="KW-0496">Mitochondrion</keyword>
<keyword id="KW-1185">Reference proteome</keyword>
<dbReference type="EMBL" id="X02819">
    <property type="protein sequence ID" value="CAA26587.1"/>
    <property type="molecule type" value="Genomic_DNA"/>
</dbReference>
<dbReference type="EMBL" id="X54421">
    <property type="protein sequence ID" value="CAA38288.1"/>
    <property type="molecule type" value="Genomic_DNA"/>
</dbReference>
<dbReference type="RefSeq" id="NP_039503.1">
    <property type="nucleotide sequence ID" value="NC_001326.1"/>
</dbReference>
<dbReference type="SMR" id="P05511"/>
<dbReference type="FunCoup" id="P05511">
    <property type="interactions" value="1"/>
</dbReference>
<dbReference type="STRING" id="284812.P05511"/>
<dbReference type="PaxDb" id="4896-SPMIT.06.1"/>
<dbReference type="PomBase" id="SPMIT.06"/>
<dbReference type="eggNOG" id="KOG4768">
    <property type="taxonomic scope" value="Eukaryota"/>
</dbReference>
<dbReference type="HOGENOM" id="CLU_013584_3_1_1"/>
<dbReference type="InParanoid" id="P05511"/>
<dbReference type="PhylomeDB" id="P05511"/>
<dbReference type="PRO" id="PR:P05511"/>
<dbReference type="Proteomes" id="UP000002485">
    <property type="component" value="Mitochondrion"/>
</dbReference>
<dbReference type="GO" id="GO:0000262">
    <property type="term" value="C:mitochondrial chromosome"/>
    <property type="evidence" value="ECO:0000305"/>
    <property type="project" value="PomBase"/>
</dbReference>
<dbReference type="GO" id="GO:0003677">
    <property type="term" value="F:DNA binding"/>
    <property type="evidence" value="ECO:0000266"/>
    <property type="project" value="PomBase"/>
</dbReference>
<dbReference type="GO" id="GO:0004519">
    <property type="term" value="F:endonuclease activity"/>
    <property type="evidence" value="ECO:0000266"/>
    <property type="project" value="PomBase"/>
</dbReference>
<dbReference type="GO" id="GO:0006315">
    <property type="term" value="P:homing of group II introns"/>
    <property type="evidence" value="ECO:0000266"/>
    <property type="project" value="PomBase"/>
</dbReference>
<dbReference type="GO" id="GO:0090615">
    <property type="term" value="P:mitochondrial mRNA processing"/>
    <property type="evidence" value="ECO:0000266"/>
    <property type="project" value="PomBase"/>
</dbReference>
<dbReference type="CDD" id="cd00085">
    <property type="entry name" value="HNHc"/>
    <property type="match status" value="1"/>
</dbReference>
<dbReference type="CDD" id="cd01651">
    <property type="entry name" value="RT_G2_intron"/>
    <property type="match status" value="1"/>
</dbReference>
<dbReference type="InterPro" id="IPR049030">
    <property type="entry name" value="AI2M-like_HNH"/>
</dbReference>
<dbReference type="InterPro" id="IPR043502">
    <property type="entry name" value="DNA/RNA_pol_sf"/>
</dbReference>
<dbReference type="InterPro" id="IPR024937">
    <property type="entry name" value="Domain_X"/>
</dbReference>
<dbReference type="InterPro" id="IPR051083">
    <property type="entry name" value="GrpII_Intron_Splice-Mob/Def"/>
</dbReference>
<dbReference type="InterPro" id="IPR003615">
    <property type="entry name" value="HNH_nuc"/>
</dbReference>
<dbReference type="InterPro" id="IPR000477">
    <property type="entry name" value="RT_dom"/>
</dbReference>
<dbReference type="PANTHER" id="PTHR34047">
    <property type="entry name" value="NUCLEAR INTRON MATURASE 1, MITOCHONDRIAL-RELATED"/>
    <property type="match status" value="1"/>
</dbReference>
<dbReference type="PANTHER" id="PTHR34047:SF8">
    <property type="entry name" value="PROTEIN YKFC"/>
    <property type="match status" value="1"/>
</dbReference>
<dbReference type="Pfam" id="PF21368">
    <property type="entry name" value="AI2M-like_HNH"/>
    <property type="match status" value="1"/>
</dbReference>
<dbReference type="Pfam" id="PF01348">
    <property type="entry name" value="Intron_maturas2"/>
    <property type="match status" value="1"/>
</dbReference>
<dbReference type="Pfam" id="PF00078">
    <property type="entry name" value="RVT_1"/>
    <property type="match status" value="2"/>
</dbReference>
<dbReference type="SMART" id="SM00507">
    <property type="entry name" value="HNHc"/>
    <property type="match status" value="1"/>
</dbReference>
<dbReference type="SUPFAM" id="SSF56672">
    <property type="entry name" value="DNA/RNA polymerases"/>
    <property type="match status" value="1"/>
</dbReference>
<dbReference type="PROSITE" id="PS50878">
    <property type="entry name" value="RT_POL"/>
    <property type="match status" value="1"/>
</dbReference>
<protein>
    <recommendedName>
        <fullName>Uncharacterized 91 kDa protein in cob intron</fullName>
    </recommendedName>
</protein>
<gene>
    <name type="ORF">SPMIT.06</name>
</gene>
<accession>P05511</accession>
<comment type="subcellular location">
    <subcellularLocation>
        <location evidence="2">Mitochondrion</location>
    </subcellularLocation>
</comment>
<comment type="miscellaneous">
    <text>This protein is coded in the group-II intron of cob.</text>
</comment>
<name>YMC6_SCHPO</name>
<reference key="1">
    <citation type="journal article" date="1985" name="J. Mol. Biol.">
        <title>The mitochondrial genome of the fission yeast Schizosaccharomyces pombe. The cytochrome b gene has an intron closely related to the first two introns in the Saccharomyces cerevisiae cox1 gene.</title>
        <authorList>
            <person name="Lang B.F."/>
            <person name="Ahne F."/>
            <person name="Bonen L."/>
        </authorList>
    </citation>
    <scope>NUCLEOTIDE SEQUENCE [LARGE SCALE GENOMIC DNA]</scope>
    <source>
        <strain>AD7-50</strain>
    </source>
</reference>
<reference key="2">
    <citation type="book" date="1993" name="Genetic Maps (6th edition)">
        <title>The mitochondrial genome of Schizosaccharomyces pombe.</title>
        <editorList>
            <person name="O'Brien S.J."/>
        </editorList>
        <authorList>
            <person name="Lang B.F."/>
        </authorList>
    </citation>
    <scope>NUCLEOTIDE SEQUENCE [LARGE SCALE GENOMIC DNA]</scope>
    <source>
        <strain>AD7-50</strain>
    </source>
</reference>